<protein>
    <recommendedName>
        <fullName>Uncharacterized lipoprotein PM0553</fullName>
    </recommendedName>
</protein>
<accession>Q9CN84</accession>
<keyword id="KW-1003">Cell membrane</keyword>
<keyword id="KW-0449">Lipoprotein</keyword>
<keyword id="KW-0472">Membrane</keyword>
<keyword id="KW-0564">Palmitate</keyword>
<keyword id="KW-1185">Reference proteome</keyword>
<keyword id="KW-0732">Signal</keyword>
<name>Y553_PASMU</name>
<proteinExistence type="inferred from homology"/>
<sequence length="101" mass="11113">MKKAAVLAVVLSLGLAGCSKNYNDQYHGNGYRAEILFSEYNGENLTLTVRKNNCEHEDGPIETIQIGHKYDSTLVVGACVRVLDNNEGLKNISTFNPRSPL</sequence>
<comment type="subcellular location">
    <subcellularLocation>
        <location evidence="1">Cell membrane</location>
        <topology evidence="1">Lipid-anchor</topology>
    </subcellularLocation>
</comment>
<reference key="1">
    <citation type="journal article" date="2001" name="Proc. Natl. Acad. Sci. U.S.A.">
        <title>Complete genomic sequence of Pasteurella multocida Pm70.</title>
        <authorList>
            <person name="May B.J."/>
            <person name="Zhang Q."/>
            <person name="Li L.L."/>
            <person name="Paustian M.L."/>
            <person name="Whittam T.S."/>
            <person name="Kapur V."/>
        </authorList>
    </citation>
    <scope>NUCLEOTIDE SEQUENCE [LARGE SCALE GENOMIC DNA]</scope>
    <source>
        <strain>Pm70</strain>
    </source>
</reference>
<evidence type="ECO:0000255" key="1">
    <source>
        <dbReference type="PROSITE-ProRule" id="PRU00303"/>
    </source>
</evidence>
<gene>
    <name type="ordered locus">PM0553</name>
</gene>
<feature type="signal peptide" evidence="1">
    <location>
        <begin position="1"/>
        <end position="17"/>
    </location>
</feature>
<feature type="chain" id="PRO_0000014176" description="Uncharacterized lipoprotein PM0553">
    <location>
        <begin position="18"/>
        <end position="101"/>
    </location>
</feature>
<feature type="lipid moiety-binding region" description="N-palmitoyl cysteine" evidence="1">
    <location>
        <position position="18"/>
    </location>
</feature>
<feature type="lipid moiety-binding region" description="S-diacylglycerol cysteine" evidence="1">
    <location>
        <position position="18"/>
    </location>
</feature>
<organism>
    <name type="scientific">Pasteurella multocida (strain Pm70)</name>
    <dbReference type="NCBI Taxonomy" id="272843"/>
    <lineage>
        <taxon>Bacteria</taxon>
        <taxon>Pseudomonadati</taxon>
        <taxon>Pseudomonadota</taxon>
        <taxon>Gammaproteobacteria</taxon>
        <taxon>Pasteurellales</taxon>
        <taxon>Pasteurellaceae</taxon>
        <taxon>Pasteurella</taxon>
    </lineage>
</organism>
<dbReference type="EMBL" id="AE004439">
    <property type="protein sequence ID" value="AAK02637.1"/>
    <property type="molecule type" value="Genomic_DNA"/>
</dbReference>
<dbReference type="RefSeq" id="WP_005751421.1">
    <property type="nucleotide sequence ID" value="NC_002663.1"/>
</dbReference>
<dbReference type="STRING" id="272843.PM0553"/>
<dbReference type="EnsemblBacteria" id="AAK02637">
    <property type="protein sequence ID" value="AAK02637"/>
    <property type="gene ID" value="PM0553"/>
</dbReference>
<dbReference type="KEGG" id="pmu:PM0553"/>
<dbReference type="HOGENOM" id="CLU_182166_0_0_6"/>
<dbReference type="OrthoDB" id="5688244at2"/>
<dbReference type="Proteomes" id="UP000000809">
    <property type="component" value="Chromosome"/>
</dbReference>
<dbReference type="GO" id="GO:0005886">
    <property type="term" value="C:plasma membrane"/>
    <property type="evidence" value="ECO:0007669"/>
    <property type="project" value="UniProtKB-SubCell"/>
</dbReference>
<dbReference type="PROSITE" id="PS51257">
    <property type="entry name" value="PROKAR_LIPOPROTEIN"/>
    <property type="match status" value="1"/>
</dbReference>